<gene>
    <name evidence="1" type="primary">alaS</name>
    <name type="ordered locus">CJE0613</name>
</gene>
<keyword id="KW-0030">Aminoacyl-tRNA synthetase</keyword>
<keyword id="KW-0067">ATP-binding</keyword>
<keyword id="KW-0963">Cytoplasm</keyword>
<keyword id="KW-0436">Ligase</keyword>
<keyword id="KW-0479">Metal-binding</keyword>
<keyword id="KW-0547">Nucleotide-binding</keyword>
<keyword id="KW-0648">Protein biosynthesis</keyword>
<keyword id="KW-0694">RNA-binding</keyword>
<keyword id="KW-0820">tRNA-binding</keyword>
<keyword id="KW-0862">Zinc</keyword>
<proteinExistence type="inferred from homology"/>
<evidence type="ECO:0000255" key="1">
    <source>
        <dbReference type="HAMAP-Rule" id="MF_00036"/>
    </source>
</evidence>
<comment type="function">
    <text evidence="1">Catalyzes the attachment of alanine to tRNA(Ala) in a two-step reaction: alanine is first activated by ATP to form Ala-AMP and then transferred to the acceptor end of tRNA(Ala). Also edits incorrectly charged Ser-tRNA(Ala) and Gly-tRNA(Ala) via its editing domain.</text>
</comment>
<comment type="catalytic activity">
    <reaction evidence="1">
        <text>tRNA(Ala) + L-alanine + ATP = L-alanyl-tRNA(Ala) + AMP + diphosphate</text>
        <dbReference type="Rhea" id="RHEA:12540"/>
        <dbReference type="Rhea" id="RHEA-COMP:9657"/>
        <dbReference type="Rhea" id="RHEA-COMP:9923"/>
        <dbReference type="ChEBI" id="CHEBI:30616"/>
        <dbReference type="ChEBI" id="CHEBI:33019"/>
        <dbReference type="ChEBI" id="CHEBI:57972"/>
        <dbReference type="ChEBI" id="CHEBI:78442"/>
        <dbReference type="ChEBI" id="CHEBI:78497"/>
        <dbReference type="ChEBI" id="CHEBI:456215"/>
        <dbReference type="EC" id="6.1.1.7"/>
    </reaction>
</comment>
<comment type="cofactor">
    <cofactor evidence="1">
        <name>Zn(2+)</name>
        <dbReference type="ChEBI" id="CHEBI:29105"/>
    </cofactor>
    <text evidence="1">Binds 1 zinc ion per subunit.</text>
</comment>
<comment type="subcellular location">
    <subcellularLocation>
        <location evidence="1">Cytoplasm</location>
    </subcellularLocation>
</comment>
<comment type="domain">
    <text evidence="1">Consists of three domains; the N-terminal catalytic domain, the editing domain and the C-terminal C-Ala domain. The editing domain removes incorrectly charged amino acids, while the C-Ala domain, along with tRNA(Ala), serves as a bridge to cooperatively bring together the editing and aminoacylation centers thus stimulating deacylation of misacylated tRNAs.</text>
</comment>
<comment type="similarity">
    <text evidence="1">Belongs to the class-II aminoacyl-tRNA synthetase family.</text>
</comment>
<sequence>MDIRKAYLDFFASKGHEITPSSPLVPDDATLLFTNAGMVPFKSIFTGEIPRPNPPRKTSCQTCIRAGGKHNDLDNVGYTARHHTFFEMLGNFSFGDYFKEQAIAYAWEFVTEVLKLPKDRLYVTVHENDDEAFNLWQKHIQKERIYKFGDKDNFWQMGDTGPCGPCSEIFYDQGQEHFNSSEDYMGGDGDRFLEIWNLVFMQYERSADGVLSPLPKPSIDTGMGLERVTAIKEGKFSNFDSSLFMPIINEISKLCNKTYVYESGASFRVIADHIRSSVFLLAQGVSFDKEGRGYVLRRILRRALRHGYLLGFKQAFMYKLVDIVCDLMGGHYTYLNEKKDFIKEQIRLEEERFLSTIENGIEIFNEELKNTKEIFSGEVAFKLYDTYGFPLDLTADMLREKNLKVDEEKFELFMNEQKARAKASWKGSGDKTASGDFKNLLEKFGENHFVGYEKAECESKILALLDEDFKEVSTLKDAGWVMLENTPFYATSGGQSADSGFIAKREVLDTQKFFNLNLSFIKAGEELKVNDIVHARIDTEKREQIARHHSATHLLHHALREILGSHVSQAGSLVESNKLRFDFTHHKALNKEELESIEKRVNKMIINSSEAILENMPLEEAKKSGAIALFNEKYQGNVRVLTLGESKELCGGTHVKNTAQIGSFYIVKESGVSAGVRRIEAVVSKAALEFVKNQLEELSKVKDELKNNDILSGIKKLKNEILSLKNELKNSSKTELDSKNIQGVEICVKRIDNGDIKAMIDDFKNKFAKAVILLIQVKDEKITLAAGVKDVPLKAGALVKEAAQILGGNGGGRDDFATAGGKDLSKINEALKQSLETIEKAL</sequence>
<accession>Q5HVQ7</accession>
<organism>
    <name type="scientific">Campylobacter jejuni (strain RM1221)</name>
    <dbReference type="NCBI Taxonomy" id="195099"/>
    <lineage>
        <taxon>Bacteria</taxon>
        <taxon>Pseudomonadati</taxon>
        <taxon>Campylobacterota</taxon>
        <taxon>Epsilonproteobacteria</taxon>
        <taxon>Campylobacterales</taxon>
        <taxon>Campylobacteraceae</taxon>
        <taxon>Campylobacter</taxon>
    </lineage>
</organism>
<feature type="chain" id="PRO_0000075084" description="Alanine--tRNA ligase">
    <location>
        <begin position="1"/>
        <end position="842"/>
    </location>
</feature>
<feature type="binding site" evidence="1">
    <location>
        <position position="549"/>
    </location>
    <ligand>
        <name>Zn(2+)</name>
        <dbReference type="ChEBI" id="CHEBI:29105"/>
    </ligand>
</feature>
<feature type="binding site" evidence="1">
    <location>
        <position position="553"/>
    </location>
    <ligand>
        <name>Zn(2+)</name>
        <dbReference type="ChEBI" id="CHEBI:29105"/>
    </ligand>
</feature>
<feature type="binding site" evidence="1">
    <location>
        <position position="650"/>
    </location>
    <ligand>
        <name>Zn(2+)</name>
        <dbReference type="ChEBI" id="CHEBI:29105"/>
    </ligand>
</feature>
<feature type="binding site" evidence="1">
    <location>
        <position position="654"/>
    </location>
    <ligand>
        <name>Zn(2+)</name>
        <dbReference type="ChEBI" id="CHEBI:29105"/>
    </ligand>
</feature>
<protein>
    <recommendedName>
        <fullName evidence="1">Alanine--tRNA ligase</fullName>
        <ecNumber evidence="1">6.1.1.7</ecNumber>
    </recommendedName>
    <alternativeName>
        <fullName evidence="1">Alanyl-tRNA synthetase</fullName>
        <shortName evidence="1">AlaRS</shortName>
    </alternativeName>
</protein>
<dbReference type="EC" id="6.1.1.7" evidence="1"/>
<dbReference type="EMBL" id="CP000025">
    <property type="protein sequence ID" value="AAW35874.1"/>
    <property type="molecule type" value="Genomic_DNA"/>
</dbReference>
<dbReference type="RefSeq" id="WP_002859051.1">
    <property type="nucleotide sequence ID" value="NC_003912.7"/>
</dbReference>
<dbReference type="SMR" id="Q5HVQ7"/>
<dbReference type="KEGG" id="cjr:CJE0613"/>
<dbReference type="HOGENOM" id="CLU_004485_1_1_7"/>
<dbReference type="GO" id="GO:0005829">
    <property type="term" value="C:cytosol"/>
    <property type="evidence" value="ECO:0007669"/>
    <property type="project" value="TreeGrafter"/>
</dbReference>
<dbReference type="GO" id="GO:0004813">
    <property type="term" value="F:alanine-tRNA ligase activity"/>
    <property type="evidence" value="ECO:0007669"/>
    <property type="project" value="UniProtKB-UniRule"/>
</dbReference>
<dbReference type="GO" id="GO:0002161">
    <property type="term" value="F:aminoacyl-tRNA deacylase activity"/>
    <property type="evidence" value="ECO:0007669"/>
    <property type="project" value="TreeGrafter"/>
</dbReference>
<dbReference type="GO" id="GO:0005524">
    <property type="term" value="F:ATP binding"/>
    <property type="evidence" value="ECO:0007669"/>
    <property type="project" value="UniProtKB-UniRule"/>
</dbReference>
<dbReference type="GO" id="GO:0000049">
    <property type="term" value="F:tRNA binding"/>
    <property type="evidence" value="ECO:0007669"/>
    <property type="project" value="UniProtKB-KW"/>
</dbReference>
<dbReference type="GO" id="GO:0008270">
    <property type="term" value="F:zinc ion binding"/>
    <property type="evidence" value="ECO:0007669"/>
    <property type="project" value="UniProtKB-UniRule"/>
</dbReference>
<dbReference type="GO" id="GO:0006419">
    <property type="term" value="P:alanyl-tRNA aminoacylation"/>
    <property type="evidence" value="ECO:0007669"/>
    <property type="project" value="UniProtKB-UniRule"/>
</dbReference>
<dbReference type="GO" id="GO:0045892">
    <property type="term" value="P:negative regulation of DNA-templated transcription"/>
    <property type="evidence" value="ECO:0007669"/>
    <property type="project" value="TreeGrafter"/>
</dbReference>
<dbReference type="CDD" id="cd00673">
    <property type="entry name" value="AlaRS_core"/>
    <property type="match status" value="1"/>
</dbReference>
<dbReference type="FunFam" id="3.10.310.40:FF:000001">
    <property type="entry name" value="Alanine--tRNA ligase"/>
    <property type="match status" value="1"/>
</dbReference>
<dbReference type="FunFam" id="3.30.54.20:FF:000001">
    <property type="entry name" value="Alanine--tRNA ligase"/>
    <property type="match status" value="1"/>
</dbReference>
<dbReference type="FunFam" id="3.30.930.10:FF:000004">
    <property type="entry name" value="Alanine--tRNA ligase"/>
    <property type="match status" value="1"/>
</dbReference>
<dbReference type="FunFam" id="3.30.980.10:FF:000004">
    <property type="entry name" value="Alanine--tRNA ligase, cytoplasmic"/>
    <property type="match status" value="1"/>
</dbReference>
<dbReference type="Gene3D" id="2.40.30.130">
    <property type="match status" value="1"/>
</dbReference>
<dbReference type="Gene3D" id="3.10.310.40">
    <property type="match status" value="1"/>
</dbReference>
<dbReference type="Gene3D" id="3.30.54.20">
    <property type="match status" value="1"/>
</dbReference>
<dbReference type="Gene3D" id="3.30.930.10">
    <property type="entry name" value="Bira Bifunctional Protein, Domain 2"/>
    <property type="match status" value="1"/>
</dbReference>
<dbReference type="Gene3D" id="3.30.980.10">
    <property type="entry name" value="Threonyl-trna Synthetase, Chain A, domain 2"/>
    <property type="match status" value="1"/>
</dbReference>
<dbReference type="HAMAP" id="MF_00036_B">
    <property type="entry name" value="Ala_tRNA_synth_B"/>
    <property type="match status" value="1"/>
</dbReference>
<dbReference type="InterPro" id="IPR045864">
    <property type="entry name" value="aa-tRNA-synth_II/BPL/LPL"/>
</dbReference>
<dbReference type="InterPro" id="IPR002318">
    <property type="entry name" value="Ala-tRNA-lgiase_IIc"/>
</dbReference>
<dbReference type="InterPro" id="IPR018162">
    <property type="entry name" value="Ala-tRNA-ligase_IIc_anticod-bd"/>
</dbReference>
<dbReference type="InterPro" id="IPR018165">
    <property type="entry name" value="Ala-tRNA-synth_IIc_core"/>
</dbReference>
<dbReference type="InterPro" id="IPR018164">
    <property type="entry name" value="Ala-tRNA-synth_IIc_N"/>
</dbReference>
<dbReference type="InterPro" id="IPR050058">
    <property type="entry name" value="Ala-tRNA_ligase"/>
</dbReference>
<dbReference type="InterPro" id="IPR023033">
    <property type="entry name" value="Ala_tRNA_ligase_euk/bac"/>
</dbReference>
<dbReference type="InterPro" id="IPR003156">
    <property type="entry name" value="DHHA1_dom"/>
</dbReference>
<dbReference type="InterPro" id="IPR018163">
    <property type="entry name" value="Thr/Ala-tRNA-synth_IIc_edit"/>
</dbReference>
<dbReference type="InterPro" id="IPR009000">
    <property type="entry name" value="Transl_B-barrel_sf"/>
</dbReference>
<dbReference type="InterPro" id="IPR012947">
    <property type="entry name" value="tRNA_SAD"/>
</dbReference>
<dbReference type="NCBIfam" id="TIGR00344">
    <property type="entry name" value="alaS"/>
    <property type="match status" value="1"/>
</dbReference>
<dbReference type="PANTHER" id="PTHR11777:SF9">
    <property type="entry name" value="ALANINE--TRNA LIGASE, CYTOPLASMIC"/>
    <property type="match status" value="1"/>
</dbReference>
<dbReference type="PANTHER" id="PTHR11777">
    <property type="entry name" value="ALANYL-TRNA SYNTHETASE"/>
    <property type="match status" value="1"/>
</dbReference>
<dbReference type="Pfam" id="PF02272">
    <property type="entry name" value="DHHA1"/>
    <property type="match status" value="1"/>
</dbReference>
<dbReference type="Pfam" id="PF01411">
    <property type="entry name" value="tRNA-synt_2c"/>
    <property type="match status" value="1"/>
</dbReference>
<dbReference type="Pfam" id="PF07973">
    <property type="entry name" value="tRNA_SAD"/>
    <property type="match status" value="1"/>
</dbReference>
<dbReference type="PRINTS" id="PR00980">
    <property type="entry name" value="TRNASYNTHALA"/>
</dbReference>
<dbReference type="SMART" id="SM00863">
    <property type="entry name" value="tRNA_SAD"/>
    <property type="match status" value="1"/>
</dbReference>
<dbReference type="SUPFAM" id="SSF55681">
    <property type="entry name" value="Class II aaRS and biotin synthetases"/>
    <property type="match status" value="1"/>
</dbReference>
<dbReference type="SUPFAM" id="SSF101353">
    <property type="entry name" value="Putative anticodon-binding domain of alanyl-tRNA synthetase (AlaRS)"/>
    <property type="match status" value="1"/>
</dbReference>
<dbReference type="SUPFAM" id="SSF55186">
    <property type="entry name" value="ThrRS/AlaRS common domain"/>
    <property type="match status" value="1"/>
</dbReference>
<dbReference type="SUPFAM" id="SSF50447">
    <property type="entry name" value="Translation proteins"/>
    <property type="match status" value="1"/>
</dbReference>
<dbReference type="PROSITE" id="PS50860">
    <property type="entry name" value="AA_TRNA_LIGASE_II_ALA"/>
    <property type="match status" value="1"/>
</dbReference>
<name>SYA_CAMJR</name>
<reference key="1">
    <citation type="journal article" date="2005" name="PLoS Biol.">
        <title>Major structural differences and novel potential virulence mechanisms from the genomes of multiple Campylobacter species.</title>
        <authorList>
            <person name="Fouts D.E."/>
            <person name="Mongodin E.F."/>
            <person name="Mandrell R.E."/>
            <person name="Miller W.G."/>
            <person name="Rasko D.A."/>
            <person name="Ravel J."/>
            <person name="Brinkac L.M."/>
            <person name="DeBoy R.T."/>
            <person name="Parker C.T."/>
            <person name="Daugherty S.C."/>
            <person name="Dodson R.J."/>
            <person name="Durkin A.S."/>
            <person name="Madupu R."/>
            <person name="Sullivan S.A."/>
            <person name="Shetty J.U."/>
            <person name="Ayodeji M.A."/>
            <person name="Shvartsbeyn A."/>
            <person name="Schatz M.C."/>
            <person name="Badger J.H."/>
            <person name="Fraser C.M."/>
            <person name="Nelson K.E."/>
        </authorList>
    </citation>
    <scope>NUCLEOTIDE SEQUENCE [LARGE SCALE GENOMIC DNA]</scope>
    <source>
        <strain>RM1221</strain>
    </source>
</reference>